<name>PETN_SYNSC</name>
<keyword id="KW-0249">Electron transport</keyword>
<keyword id="KW-0472">Membrane</keyword>
<keyword id="KW-0602">Photosynthesis</keyword>
<keyword id="KW-0793">Thylakoid</keyword>
<keyword id="KW-0812">Transmembrane</keyword>
<keyword id="KW-1133">Transmembrane helix</keyword>
<keyword id="KW-0813">Transport</keyword>
<feature type="chain" id="PRO_1000049583" description="Cytochrome b6-f complex subunit 8">
    <location>
        <begin position="1"/>
        <end position="33"/>
    </location>
</feature>
<feature type="transmembrane region" description="Helical" evidence="1">
    <location>
        <begin position="2"/>
        <end position="22"/>
    </location>
</feature>
<proteinExistence type="inferred from homology"/>
<evidence type="ECO:0000255" key="1">
    <source>
        <dbReference type="HAMAP-Rule" id="MF_00395"/>
    </source>
</evidence>
<accession>Q3AJN5</accession>
<sequence>MLFTLGWASLAAMFSFSIAMVVWGRNGDGTLNF</sequence>
<comment type="function">
    <text evidence="1">Component of the cytochrome b6-f complex, which mediates electron transfer between photosystem II (PSII) and photosystem I (PSI), cyclic electron flow around PSI, and state transitions.</text>
</comment>
<comment type="subunit">
    <text evidence="1">The 4 large subunits of the cytochrome b6-f complex are cytochrome b6, subunit IV (17 kDa polypeptide, PetD), cytochrome f and the Rieske protein, while the 4 small subunits are PetG, PetL, PetM and PetN. The complex functions as a dimer.</text>
</comment>
<comment type="subcellular location">
    <subcellularLocation>
        <location evidence="1">Cellular thylakoid membrane</location>
        <topology evidence="1">Single-pass membrane protein</topology>
    </subcellularLocation>
</comment>
<comment type="similarity">
    <text evidence="1">Belongs to the PetN family.</text>
</comment>
<reference key="1">
    <citation type="submission" date="2005-07" db="EMBL/GenBank/DDBJ databases">
        <title>Complete sequence of Synechococcus sp. CC9605.</title>
        <authorList>
            <consortium name="US DOE Joint Genome Institute"/>
            <person name="Copeland A."/>
            <person name="Lucas S."/>
            <person name="Lapidus A."/>
            <person name="Barry K."/>
            <person name="Detter J.C."/>
            <person name="Glavina T."/>
            <person name="Hammon N."/>
            <person name="Israni S."/>
            <person name="Pitluck S."/>
            <person name="Schmutz J."/>
            <person name="Martinez M."/>
            <person name="Larimer F."/>
            <person name="Land M."/>
            <person name="Kyrpides N."/>
            <person name="Ivanova N."/>
            <person name="Richardson P."/>
        </authorList>
    </citation>
    <scope>NUCLEOTIDE SEQUENCE [LARGE SCALE GENOMIC DNA]</scope>
    <source>
        <strain>CC9605</strain>
    </source>
</reference>
<gene>
    <name evidence="1" type="primary">petN</name>
    <name type="ordered locus">Syncc9605_1443</name>
</gene>
<dbReference type="EMBL" id="CP000110">
    <property type="protein sequence ID" value="ABB35197.1"/>
    <property type="molecule type" value="Genomic_DNA"/>
</dbReference>
<dbReference type="RefSeq" id="WP_011364412.1">
    <property type="nucleotide sequence ID" value="NC_007516.1"/>
</dbReference>
<dbReference type="SMR" id="Q3AJN5"/>
<dbReference type="STRING" id="110662.Syncc9605_1443"/>
<dbReference type="KEGG" id="syd:Syncc9605_1443"/>
<dbReference type="eggNOG" id="ENOG502ZT1J">
    <property type="taxonomic scope" value="Bacteria"/>
</dbReference>
<dbReference type="HOGENOM" id="CLU_215774_0_0_3"/>
<dbReference type="OrthoDB" id="560308at2"/>
<dbReference type="GO" id="GO:0009512">
    <property type="term" value="C:cytochrome b6f complex"/>
    <property type="evidence" value="ECO:0007669"/>
    <property type="project" value="InterPro"/>
</dbReference>
<dbReference type="GO" id="GO:0031676">
    <property type="term" value="C:plasma membrane-derived thylakoid membrane"/>
    <property type="evidence" value="ECO:0007669"/>
    <property type="project" value="UniProtKB-SubCell"/>
</dbReference>
<dbReference type="GO" id="GO:0045158">
    <property type="term" value="F:electron transporter, transferring electrons within cytochrome b6/f complex of photosystem II activity"/>
    <property type="evidence" value="ECO:0007669"/>
    <property type="project" value="InterPro"/>
</dbReference>
<dbReference type="GO" id="GO:0017004">
    <property type="term" value="P:cytochrome complex assembly"/>
    <property type="evidence" value="ECO:0007669"/>
    <property type="project" value="UniProtKB-UniRule"/>
</dbReference>
<dbReference type="GO" id="GO:0015979">
    <property type="term" value="P:photosynthesis"/>
    <property type="evidence" value="ECO:0007669"/>
    <property type="project" value="UniProtKB-KW"/>
</dbReference>
<dbReference type="HAMAP" id="MF_00395">
    <property type="entry name" value="Cytb6_f_PetN"/>
    <property type="match status" value="1"/>
</dbReference>
<dbReference type="InterPro" id="IPR036143">
    <property type="entry name" value="Cytochr_b6-f_cplx_su8_sf"/>
</dbReference>
<dbReference type="InterPro" id="IPR005497">
    <property type="entry name" value="Cytochrome_b6-f_cplx_su8"/>
</dbReference>
<dbReference type="NCBIfam" id="NF002709">
    <property type="entry name" value="PRK02529.1"/>
    <property type="match status" value="1"/>
</dbReference>
<dbReference type="Pfam" id="PF03742">
    <property type="entry name" value="PetN"/>
    <property type="match status" value="1"/>
</dbReference>
<dbReference type="SUPFAM" id="SSF103451">
    <property type="entry name" value="PetN subunit of the cytochrome b6f complex"/>
    <property type="match status" value="1"/>
</dbReference>
<organism>
    <name type="scientific">Synechococcus sp. (strain CC9605)</name>
    <dbReference type="NCBI Taxonomy" id="110662"/>
    <lineage>
        <taxon>Bacteria</taxon>
        <taxon>Bacillati</taxon>
        <taxon>Cyanobacteriota</taxon>
        <taxon>Cyanophyceae</taxon>
        <taxon>Synechococcales</taxon>
        <taxon>Synechococcaceae</taxon>
        <taxon>Synechococcus</taxon>
    </lineage>
</organism>
<protein>
    <recommendedName>
        <fullName evidence="1">Cytochrome b6-f complex subunit 8</fullName>
    </recommendedName>
    <alternativeName>
        <fullName evidence="1">Cytochrome b6-f complex subunit PetN</fullName>
    </alternativeName>
    <alternativeName>
        <fullName evidence="1">Cytochrome b6-f complex subunit VIII</fullName>
    </alternativeName>
</protein>